<sequence>MPRGSVLLLASLLLAAALSATLGLGSPVKEKRGWTLNSAGYLLGPHALDSHRSFQDKHGLAGKRELEPEDEARPGSFDRPLAENNVVRTIIEFLTFLHLKDAGALERLPSLPTAESAEDAERS</sequence>
<organism>
    <name type="scientific">Bos taurus</name>
    <name type="common">Bovine</name>
    <dbReference type="NCBI Taxonomy" id="9913"/>
    <lineage>
        <taxon>Eukaryota</taxon>
        <taxon>Metazoa</taxon>
        <taxon>Chordata</taxon>
        <taxon>Craniata</taxon>
        <taxon>Vertebrata</taxon>
        <taxon>Euteleostomi</taxon>
        <taxon>Mammalia</taxon>
        <taxon>Eutheria</taxon>
        <taxon>Laurasiatheria</taxon>
        <taxon>Artiodactyla</taxon>
        <taxon>Ruminantia</taxon>
        <taxon>Pecora</taxon>
        <taxon>Bovidae</taxon>
        <taxon>Bovinae</taxon>
        <taxon>Bos</taxon>
    </lineage>
</organism>
<name>GALA_BOVIN</name>
<feature type="signal peptide" evidence="3">
    <location>
        <begin position="1"/>
        <end position="19"/>
    </location>
</feature>
<feature type="propeptide" id="PRO_0000010443">
    <location>
        <begin position="20"/>
        <end position="30"/>
    </location>
</feature>
<feature type="peptide" id="PRO_0000010444" description="Galanin">
    <location>
        <begin position="33"/>
        <end position="61"/>
    </location>
</feature>
<feature type="peptide" id="PRO_0000010445" description="Galanin message-associated peptide">
    <location>
        <begin position="65"/>
        <end position="123"/>
    </location>
</feature>
<feature type="region of interest" description="Disordered" evidence="4">
    <location>
        <begin position="53"/>
        <end position="79"/>
    </location>
</feature>
<feature type="compositionally biased region" description="Basic and acidic residues" evidence="4">
    <location>
        <begin position="53"/>
        <end position="66"/>
    </location>
</feature>
<feature type="modified residue" description="Alanine amide" evidence="5">
    <location>
        <position position="61"/>
    </location>
</feature>
<feature type="modified residue" description="Phosphoserine" evidence="2">
    <location>
        <position position="116"/>
    </location>
</feature>
<comment type="function">
    <text evidence="1 2">Endocrine hormone of the central and peripheral nervous systems that binds and activates the G protein-coupled receptors GALR1, GALR2, and GALR3. This small neuropeptide may regulate diverse physiologic functions including contraction of smooth muscle of the gastrointestinal and genitourinary tract, growth hormone and insulin release and adrenal secretion.</text>
</comment>
<comment type="subcellular location">
    <subcellularLocation>
        <location evidence="1 2">Secreted</location>
    </subcellularLocation>
</comment>
<comment type="similarity">
    <text evidence="6">Belongs to the galanin family.</text>
</comment>
<dbReference type="EMBL" id="X12582">
    <property type="protein sequence ID" value="CAA31094.1"/>
    <property type="molecule type" value="mRNA"/>
</dbReference>
<dbReference type="EMBL" id="BC126798">
    <property type="protein sequence ID" value="AAI26799.1"/>
    <property type="molecule type" value="mRNA"/>
</dbReference>
<dbReference type="EMBL" id="S68957">
    <property type="protein sequence ID" value="AAD14027.1"/>
    <property type="molecule type" value="Genomic_DNA"/>
</dbReference>
<dbReference type="PIR" id="S01011">
    <property type="entry name" value="RHBOG"/>
</dbReference>
<dbReference type="RefSeq" id="NP_776339.1">
    <property type="nucleotide sequence ID" value="NM_173914.2"/>
</dbReference>
<dbReference type="SMR" id="P11242"/>
<dbReference type="FunCoup" id="P11242">
    <property type="interactions" value="30"/>
</dbReference>
<dbReference type="STRING" id="9913.ENSBTAP00000060501"/>
<dbReference type="PaxDb" id="9913-ENSBTAP00000012362"/>
<dbReference type="GeneID" id="280799"/>
<dbReference type="KEGG" id="bta:280799"/>
<dbReference type="CTD" id="51083"/>
<dbReference type="VEuPathDB" id="HostDB:ENSBTAG00000009393"/>
<dbReference type="eggNOG" id="ENOG502RZ1E">
    <property type="taxonomic scope" value="Eukaryota"/>
</dbReference>
<dbReference type="HOGENOM" id="CLU_166244_0_0_1"/>
<dbReference type="InParanoid" id="P11242"/>
<dbReference type="OMA" id="PHAVDSH"/>
<dbReference type="OrthoDB" id="8721537at2759"/>
<dbReference type="TreeFam" id="TF335850"/>
<dbReference type="Reactome" id="R-BTA-375276">
    <property type="pathway name" value="Peptide ligand-binding receptors"/>
</dbReference>
<dbReference type="Reactome" id="R-BTA-418594">
    <property type="pathway name" value="G alpha (i) signalling events"/>
</dbReference>
<dbReference type="Proteomes" id="UP000009136">
    <property type="component" value="Chromosome 29"/>
</dbReference>
<dbReference type="Bgee" id="ENSBTAG00000009393">
    <property type="expression patterns" value="Expressed in ascending colon and 71 other cell types or tissues"/>
</dbReference>
<dbReference type="GO" id="GO:0005615">
    <property type="term" value="C:extracellular space"/>
    <property type="evidence" value="ECO:0000318"/>
    <property type="project" value="GO_Central"/>
</dbReference>
<dbReference type="GO" id="GO:0030141">
    <property type="term" value="C:secretory granule"/>
    <property type="evidence" value="ECO:0000318"/>
    <property type="project" value="GO_Central"/>
</dbReference>
<dbReference type="GO" id="GO:0004966">
    <property type="term" value="F:galanin receptor activity"/>
    <property type="evidence" value="ECO:0000250"/>
    <property type="project" value="UniProtKB"/>
</dbReference>
<dbReference type="GO" id="GO:0031763">
    <property type="term" value="F:galanin receptor binding"/>
    <property type="evidence" value="ECO:0000318"/>
    <property type="project" value="GO_Central"/>
</dbReference>
<dbReference type="GO" id="GO:0005184">
    <property type="term" value="F:neuropeptide hormone activity"/>
    <property type="evidence" value="ECO:0000250"/>
    <property type="project" value="UniProtKB"/>
</dbReference>
<dbReference type="GO" id="GO:0031764">
    <property type="term" value="F:type 1 galanin receptor binding"/>
    <property type="evidence" value="ECO:0000250"/>
    <property type="project" value="UniProtKB"/>
</dbReference>
<dbReference type="GO" id="GO:0031765">
    <property type="term" value="F:type 2 galanin receptor binding"/>
    <property type="evidence" value="ECO:0000250"/>
    <property type="project" value="UniProtKB"/>
</dbReference>
<dbReference type="GO" id="GO:0031766">
    <property type="term" value="F:type 3 galanin receptor binding"/>
    <property type="evidence" value="ECO:0000250"/>
    <property type="project" value="UniProtKB"/>
</dbReference>
<dbReference type="GO" id="GO:0007218">
    <property type="term" value="P:neuropeptide signaling pathway"/>
    <property type="evidence" value="ECO:0000318"/>
    <property type="project" value="GO_Central"/>
</dbReference>
<dbReference type="GO" id="GO:0045944">
    <property type="term" value="P:positive regulation of transcription by RNA polymerase II"/>
    <property type="evidence" value="ECO:0000250"/>
    <property type="project" value="UniProtKB"/>
</dbReference>
<dbReference type="InterPro" id="IPR008174">
    <property type="entry name" value="Galanin"/>
</dbReference>
<dbReference type="InterPro" id="IPR008175">
    <property type="entry name" value="Galanin_pre"/>
</dbReference>
<dbReference type="InterPro" id="IPR013068">
    <property type="entry name" value="GMAP"/>
</dbReference>
<dbReference type="PANTHER" id="PTHR16839">
    <property type="entry name" value="GALANIN"/>
    <property type="match status" value="1"/>
</dbReference>
<dbReference type="PANTHER" id="PTHR16839:SF1">
    <property type="entry name" value="GALANIN PEPTIDES"/>
    <property type="match status" value="1"/>
</dbReference>
<dbReference type="Pfam" id="PF01296">
    <property type="entry name" value="Galanin"/>
    <property type="match status" value="1"/>
</dbReference>
<dbReference type="Pfam" id="PF06540">
    <property type="entry name" value="GMAP"/>
    <property type="match status" value="1"/>
</dbReference>
<dbReference type="PRINTS" id="PR00273">
    <property type="entry name" value="GALANIN"/>
</dbReference>
<dbReference type="SMART" id="SM00071">
    <property type="entry name" value="Galanin"/>
    <property type="match status" value="1"/>
</dbReference>
<dbReference type="PROSITE" id="PS00861">
    <property type="entry name" value="GALANIN"/>
    <property type="match status" value="1"/>
</dbReference>
<reference key="1">
    <citation type="journal article" date="1988" name="FEBS Lett.">
        <title>Nucleotide sequence analysis of cDNAs encoding a bovine galanin precursor protein in the adrenal medulla and chemical isolation of bovine gut galanin.</title>
        <authorList>
            <person name="Roekaeus A."/>
            <person name="Carlquist M."/>
        </authorList>
    </citation>
    <scope>NUCLEOTIDE SEQUENCE [MRNA]</scope>
    <scope>AMINO-ACID COMPOSITION OF GALANIN</scope>
    <scope>AMIDATION AT ALA-61</scope>
</reference>
<reference key="2">
    <citation type="submission" date="2006-10" db="EMBL/GenBank/DDBJ databases">
        <authorList>
            <consortium name="NIH - Mammalian Gene Collection (MGC) project"/>
        </authorList>
    </citation>
    <scope>NUCLEOTIDE SEQUENCE [LARGE SCALE MRNA]</scope>
    <source>
        <strain>Hereford</strain>
        <tissue>Fetal cerebellum</tissue>
    </source>
</reference>
<reference key="3">
    <citation type="journal article" date="1994" name="J. Biol. Chem.">
        <title>Identification of a TPA-responsive element mediating preferential transactivation of the galanin gene promoter in chromaffin cells.</title>
        <authorList>
            <person name="Anouar Y."/>
            <person name="Macarthur L."/>
            <person name="Cohen J."/>
            <person name="Iacangelo A.L."/>
            <person name="Eiden L.E."/>
        </authorList>
    </citation>
    <scope>NUCLEOTIDE SEQUENCE [GENOMIC DNA] OF 1-27</scope>
</reference>
<evidence type="ECO:0000250" key="1">
    <source>
        <dbReference type="UniProtKB" id="P07480"/>
    </source>
</evidence>
<evidence type="ECO:0000250" key="2">
    <source>
        <dbReference type="UniProtKB" id="P22466"/>
    </source>
</evidence>
<evidence type="ECO:0000255" key="3"/>
<evidence type="ECO:0000256" key="4">
    <source>
        <dbReference type="SAM" id="MobiDB-lite"/>
    </source>
</evidence>
<evidence type="ECO:0000269" key="5">
    <source>
    </source>
</evidence>
<evidence type="ECO:0000305" key="6"/>
<gene>
    <name type="primary">GAL</name>
    <name type="synonym">GALN</name>
</gene>
<keyword id="KW-0027">Amidation</keyword>
<keyword id="KW-0165">Cleavage on pair of basic residues</keyword>
<keyword id="KW-0372">Hormone</keyword>
<keyword id="KW-0527">Neuropeptide</keyword>
<keyword id="KW-0597">Phosphoprotein</keyword>
<keyword id="KW-1185">Reference proteome</keyword>
<keyword id="KW-0964">Secreted</keyword>
<keyword id="KW-0732">Signal</keyword>
<accession>P11242</accession>
<accession>A0JNM9</accession>
<protein>
    <recommendedName>
        <fullName>Galanin peptides</fullName>
    </recommendedName>
    <component>
        <recommendedName>
            <fullName>Galanin</fullName>
        </recommendedName>
    </component>
    <component>
        <recommendedName>
            <fullName>Galanin message-associated peptide</fullName>
            <shortName>GMAP</shortName>
        </recommendedName>
    </component>
</protein>
<proteinExistence type="evidence at protein level"/>